<keyword id="KW-0472">Membrane</keyword>
<keyword id="KW-0812">Transmembrane</keyword>
<keyword id="KW-1133">Transmembrane helix</keyword>
<feature type="chain" id="PRO_0000101441" description="Uncharacterized protein RC0051">
    <location>
        <begin position="1"/>
        <end position="117"/>
    </location>
</feature>
<feature type="transmembrane region" description="Helical" evidence="1">
    <location>
        <begin position="10"/>
        <end position="32"/>
    </location>
</feature>
<gene>
    <name type="ordered locus">RC0051</name>
</gene>
<comment type="subcellular location">
    <subcellularLocation>
        <location evidence="2">Membrane</location>
        <topology evidence="2">Single-pass membrane protein</topology>
    </subcellularLocation>
</comment>
<protein>
    <recommendedName>
        <fullName>Uncharacterized protein RC0051</fullName>
    </recommendedName>
</protein>
<dbReference type="EMBL" id="AE006914">
    <property type="protein sequence ID" value="AAL02589.1"/>
    <property type="molecule type" value="Genomic_DNA"/>
</dbReference>
<dbReference type="PIR" id="C97706">
    <property type="entry name" value="C97706"/>
</dbReference>
<dbReference type="RefSeq" id="WP_010976738.1">
    <property type="nucleotide sequence ID" value="NC_003103.1"/>
</dbReference>
<dbReference type="SMR" id="Q92JL6"/>
<dbReference type="GeneID" id="928613"/>
<dbReference type="KEGG" id="rco:RC0051"/>
<dbReference type="PATRIC" id="fig|272944.4.peg.61"/>
<dbReference type="HOGENOM" id="CLU_168291_0_0_5"/>
<dbReference type="Proteomes" id="UP000000816">
    <property type="component" value="Chromosome"/>
</dbReference>
<dbReference type="GO" id="GO:0016020">
    <property type="term" value="C:membrane"/>
    <property type="evidence" value="ECO:0007669"/>
    <property type="project" value="UniProtKB-SubCell"/>
</dbReference>
<accession>Q92JL6</accession>
<organism>
    <name type="scientific">Rickettsia conorii (strain ATCC VR-613 / Malish 7)</name>
    <dbReference type="NCBI Taxonomy" id="272944"/>
    <lineage>
        <taxon>Bacteria</taxon>
        <taxon>Pseudomonadati</taxon>
        <taxon>Pseudomonadota</taxon>
        <taxon>Alphaproteobacteria</taxon>
        <taxon>Rickettsiales</taxon>
        <taxon>Rickettsiaceae</taxon>
        <taxon>Rickettsieae</taxon>
        <taxon>Rickettsia</taxon>
        <taxon>spotted fever group</taxon>
    </lineage>
</organism>
<reference key="1">
    <citation type="journal article" date="2001" name="Science">
        <title>Mechanisms of evolution in Rickettsia conorii and R. prowazekii.</title>
        <authorList>
            <person name="Ogata H."/>
            <person name="Audic S."/>
            <person name="Renesto-Audiffren P."/>
            <person name="Fournier P.-E."/>
            <person name="Barbe V."/>
            <person name="Samson D."/>
            <person name="Roux V."/>
            <person name="Cossart P."/>
            <person name="Weissenbach J."/>
            <person name="Claverie J.-M."/>
            <person name="Raoult D."/>
        </authorList>
    </citation>
    <scope>NUCLEOTIDE SEQUENCE [LARGE SCALE GENOMIC DNA]</scope>
    <source>
        <strain>ATCC VR-613 / Malish 7</strain>
    </source>
</reference>
<sequence length="117" mass="13300">MSASSLIKWVCYLGDIAASGFLNSIATALIAVLHDAGDNMFNSKEEKKLVDILTKFYKMINKQSDITVPVGQDLQRLALLFANLRSVEIKKNNETDFSNFFTTKLPMHNKFFRYDTK</sequence>
<name>Y051_RICCN</name>
<proteinExistence type="predicted"/>
<evidence type="ECO:0000255" key="1"/>
<evidence type="ECO:0000305" key="2"/>